<keyword id="KW-0963">Cytoplasm</keyword>
<keyword id="KW-0489">Methyltransferase</keyword>
<keyword id="KW-1185">Reference proteome</keyword>
<keyword id="KW-0949">S-adenosyl-L-methionine</keyword>
<keyword id="KW-0808">Transferase</keyword>
<keyword id="KW-0819">tRNA processing</keyword>
<gene>
    <name type="primary">trmD</name>
    <name type="ordered locus">BH2479</name>
</gene>
<proteinExistence type="inferred from homology"/>
<sequence length="246" mass="28023">MKIDFLTLFPEMFQGVLHSSILKQAQERGAVSFRVVNFREYSENKHKKVDDYPYGGGAGMVLSPQPLFDAVEDLTKKSSSTPRVILMCPQGETFTQRKAEELAQAEHLILLCGHYEGYDERIRSYLVTDELSIGDYVLTGGELGAMVIADSVTRLLPAVLGNETSAQTDSFSTGLLEYPQYTRPADFRGWKVPDVLLSGHHQNIERWRKEQSLKRTLERRPDLLEGRKLTEEEQELLDSIRKQQEK</sequence>
<dbReference type="EC" id="2.1.1.228"/>
<dbReference type="EMBL" id="BA000004">
    <property type="protein sequence ID" value="BAB06198.1"/>
    <property type="molecule type" value="Genomic_DNA"/>
</dbReference>
<dbReference type="PIR" id="G83959">
    <property type="entry name" value="G83959"/>
</dbReference>
<dbReference type="RefSeq" id="WP_010898630.1">
    <property type="nucleotide sequence ID" value="NC_002570.2"/>
</dbReference>
<dbReference type="SMR" id="Q9KA15"/>
<dbReference type="STRING" id="272558.gene:10728377"/>
<dbReference type="KEGG" id="bha:BH2479"/>
<dbReference type="eggNOG" id="COG0336">
    <property type="taxonomic scope" value="Bacteria"/>
</dbReference>
<dbReference type="HOGENOM" id="CLU_047363_0_1_9"/>
<dbReference type="OrthoDB" id="9807416at2"/>
<dbReference type="Proteomes" id="UP000001258">
    <property type="component" value="Chromosome"/>
</dbReference>
<dbReference type="GO" id="GO:0005829">
    <property type="term" value="C:cytosol"/>
    <property type="evidence" value="ECO:0007669"/>
    <property type="project" value="TreeGrafter"/>
</dbReference>
<dbReference type="GO" id="GO:0052906">
    <property type="term" value="F:tRNA (guanine(37)-N1)-methyltransferase activity"/>
    <property type="evidence" value="ECO:0007669"/>
    <property type="project" value="UniProtKB-UniRule"/>
</dbReference>
<dbReference type="GO" id="GO:0002939">
    <property type="term" value="P:tRNA N1-guanine methylation"/>
    <property type="evidence" value="ECO:0007669"/>
    <property type="project" value="TreeGrafter"/>
</dbReference>
<dbReference type="CDD" id="cd18080">
    <property type="entry name" value="TrmD-like"/>
    <property type="match status" value="1"/>
</dbReference>
<dbReference type="FunFam" id="1.10.1270.20:FF:000001">
    <property type="entry name" value="tRNA (guanine-N(1)-)-methyltransferase"/>
    <property type="match status" value="1"/>
</dbReference>
<dbReference type="FunFam" id="3.40.1280.10:FF:000001">
    <property type="entry name" value="tRNA (guanine-N(1)-)-methyltransferase"/>
    <property type="match status" value="1"/>
</dbReference>
<dbReference type="Gene3D" id="3.40.1280.10">
    <property type="match status" value="1"/>
</dbReference>
<dbReference type="Gene3D" id="1.10.1270.20">
    <property type="entry name" value="tRNA(m1g37)methyltransferase, domain 2"/>
    <property type="match status" value="1"/>
</dbReference>
<dbReference type="HAMAP" id="MF_00605">
    <property type="entry name" value="TrmD"/>
    <property type="match status" value="1"/>
</dbReference>
<dbReference type="InterPro" id="IPR029028">
    <property type="entry name" value="Alpha/beta_knot_MTases"/>
</dbReference>
<dbReference type="InterPro" id="IPR023148">
    <property type="entry name" value="tRNA_m1G_MeTrfase_C_sf"/>
</dbReference>
<dbReference type="InterPro" id="IPR002649">
    <property type="entry name" value="tRNA_m1G_MeTrfase_TrmD"/>
</dbReference>
<dbReference type="InterPro" id="IPR029026">
    <property type="entry name" value="tRNA_m1G_MTases_N"/>
</dbReference>
<dbReference type="InterPro" id="IPR016009">
    <property type="entry name" value="tRNA_MeTrfase_TRMD/TRM10"/>
</dbReference>
<dbReference type="NCBIfam" id="NF000648">
    <property type="entry name" value="PRK00026.1"/>
    <property type="match status" value="1"/>
</dbReference>
<dbReference type="NCBIfam" id="TIGR00088">
    <property type="entry name" value="trmD"/>
    <property type="match status" value="1"/>
</dbReference>
<dbReference type="PANTHER" id="PTHR46417">
    <property type="entry name" value="TRNA (GUANINE-N(1)-)-METHYLTRANSFERASE"/>
    <property type="match status" value="1"/>
</dbReference>
<dbReference type="PANTHER" id="PTHR46417:SF1">
    <property type="entry name" value="TRNA (GUANINE-N(1)-)-METHYLTRANSFERASE"/>
    <property type="match status" value="1"/>
</dbReference>
<dbReference type="Pfam" id="PF01746">
    <property type="entry name" value="tRNA_m1G_MT"/>
    <property type="match status" value="1"/>
</dbReference>
<dbReference type="PIRSF" id="PIRSF000386">
    <property type="entry name" value="tRNA_mtase"/>
    <property type="match status" value="1"/>
</dbReference>
<dbReference type="SUPFAM" id="SSF75217">
    <property type="entry name" value="alpha/beta knot"/>
    <property type="match status" value="1"/>
</dbReference>
<comment type="function">
    <text evidence="1">Specifically methylates guanosine-37 in various tRNAs.</text>
</comment>
<comment type="catalytic activity">
    <reaction>
        <text>guanosine(37) in tRNA + S-adenosyl-L-methionine = N(1)-methylguanosine(37) in tRNA + S-adenosyl-L-homocysteine + H(+)</text>
        <dbReference type="Rhea" id="RHEA:36899"/>
        <dbReference type="Rhea" id="RHEA-COMP:10145"/>
        <dbReference type="Rhea" id="RHEA-COMP:10147"/>
        <dbReference type="ChEBI" id="CHEBI:15378"/>
        <dbReference type="ChEBI" id="CHEBI:57856"/>
        <dbReference type="ChEBI" id="CHEBI:59789"/>
        <dbReference type="ChEBI" id="CHEBI:73542"/>
        <dbReference type="ChEBI" id="CHEBI:74269"/>
        <dbReference type="EC" id="2.1.1.228"/>
    </reaction>
</comment>
<comment type="subunit">
    <text evidence="1">Homodimer.</text>
</comment>
<comment type="subcellular location">
    <subcellularLocation>
        <location evidence="2">Cytoplasm</location>
    </subcellularLocation>
</comment>
<comment type="similarity">
    <text evidence="2">Belongs to the RNA methyltransferase TrmD family.</text>
</comment>
<feature type="chain" id="PRO_0000060324" description="tRNA (guanine-N(1)-)-methyltransferase">
    <location>
        <begin position="1"/>
        <end position="246"/>
    </location>
</feature>
<feature type="binding site" evidence="1">
    <location>
        <position position="113"/>
    </location>
    <ligand>
        <name>S-adenosyl-L-methionine</name>
        <dbReference type="ChEBI" id="CHEBI:59789"/>
    </ligand>
</feature>
<feature type="binding site" evidence="1">
    <location>
        <begin position="133"/>
        <end position="138"/>
    </location>
    <ligand>
        <name>S-adenosyl-L-methionine</name>
        <dbReference type="ChEBI" id="CHEBI:59789"/>
    </ligand>
</feature>
<reference key="1">
    <citation type="journal article" date="2000" name="Nucleic Acids Res.">
        <title>Complete genome sequence of the alkaliphilic bacterium Bacillus halodurans and genomic sequence comparison with Bacillus subtilis.</title>
        <authorList>
            <person name="Takami H."/>
            <person name="Nakasone K."/>
            <person name="Takaki Y."/>
            <person name="Maeno G."/>
            <person name="Sasaki R."/>
            <person name="Masui N."/>
            <person name="Fuji F."/>
            <person name="Hirama C."/>
            <person name="Nakamura Y."/>
            <person name="Ogasawara N."/>
            <person name="Kuhara S."/>
            <person name="Horikoshi K."/>
        </authorList>
    </citation>
    <scope>NUCLEOTIDE SEQUENCE [LARGE SCALE GENOMIC DNA]</scope>
    <source>
        <strain>ATCC BAA-125 / DSM 18197 / FERM 7344 / JCM 9153 / C-125</strain>
    </source>
</reference>
<name>TRMD_HALH5</name>
<evidence type="ECO:0000250" key="1"/>
<evidence type="ECO:0000305" key="2"/>
<organism>
    <name type="scientific">Halalkalibacterium halodurans (strain ATCC BAA-125 / DSM 18197 / FERM 7344 / JCM 9153 / C-125)</name>
    <name type="common">Bacillus halodurans</name>
    <dbReference type="NCBI Taxonomy" id="272558"/>
    <lineage>
        <taxon>Bacteria</taxon>
        <taxon>Bacillati</taxon>
        <taxon>Bacillota</taxon>
        <taxon>Bacilli</taxon>
        <taxon>Bacillales</taxon>
        <taxon>Bacillaceae</taxon>
        <taxon>Halalkalibacterium (ex Joshi et al. 2022)</taxon>
    </lineage>
</organism>
<protein>
    <recommendedName>
        <fullName>tRNA (guanine-N(1)-)-methyltransferase</fullName>
        <ecNumber>2.1.1.228</ecNumber>
    </recommendedName>
    <alternativeName>
        <fullName>M1G-methyltransferase</fullName>
    </alternativeName>
    <alternativeName>
        <fullName>tRNA [GM37] methyltransferase</fullName>
    </alternativeName>
</protein>
<accession>Q9KA15</accession>